<organism>
    <name type="scientific">Carboxydothermus hydrogenoformans (strain ATCC BAA-161 / DSM 6008 / Z-2901)</name>
    <dbReference type="NCBI Taxonomy" id="246194"/>
    <lineage>
        <taxon>Bacteria</taxon>
        <taxon>Bacillati</taxon>
        <taxon>Bacillota</taxon>
        <taxon>Clostridia</taxon>
        <taxon>Thermoanaerobacterales</taxon>
        <taxon>Thermoanaerobacteraceae</taxon>
        <taxon>Carboxydothermus</taxon>
    </lineage>
</organism>
<feature type="chain" id="PRO_0000230393" description="Small ribosomal subunit protein uS11">
    <location>
        <begin position="1"/>
        <end position="129"/>
    </location>
</feature>
<keyword id="KW-1185">Reference proteome</keyword>
<keyword id="KW-0687">Ribonucleoprotein</keyword>
<keyword id="KW-0689">Ribosomal protein</keyword>
<keyword id="KW-0694">RNA-binding</keyword>
<keyword id="KW-0699">rRNA-binding</keyword>
<sequence length="129" mass="13909">MMARRTKARKKEKKHVEQGVAHIKSTFNNTIVTITDPQGNTLSWASAGTVGFEGTRKGTPFAAQLAAEKAAKEAMEFGVKTVEVYVKGPGAGREAAIRSLQAAGLEVSLIKDVTPIPHNGCRPPKRRRV</sequence>
<comment type="function">
    <text evidence="1">Located on the platform of the 30S subunit, it bridges several disparate RNA helices of the 16S rRNA. Forms part of the Shine-Dalgarno cleft in the 70S ribosome.</text>
</comment>
<comment type="subunit">
    <text evidence="1">Part of the 30S ribosomal subunit. Interacts with proteins S7 and S18. Binds to IF-3.</text>
</comment>
<comment type="similarity">
    <text evidence="1">Belongs to the universal ribosomal protein uS11 family.</text>
</comment>
<name>RS11_CARHZ</name>
<accession>Q3A9U2</accession>
<proteinExistence type="inferred from homology"/>
<evidence type="ECO:0000255" key="1">
    <source>
        <dbReference type="HAMAP-Rule" id="MF_01310"/>
    </source>
</evidence>
<evidence type="ECO:0000305" key="2"/>
<reference key="1">
    <citation type="journal article" date="2005" name="PLoS Genet.">
        <title>Life in hot carbon monoxide: the complete genome sequence of Carboxydothermus hydrogenoformans Z-2901.</title>
        <authorList>
            <person name="Wu M."/>
            <person name="Ren Q."/>
            <person name="Durkin A.S."/>
            <person name="Daugherty S.C."/>
            <person name="Brinkac L.M."/>
            <person name="Dodson R.J."/>
            <person name="Madupu R."/>
            <person name="Sullivan S.A."/>
            <person name="Kolonay J.F."/>
            <person name="Nelson W.C."/>
            <person name="Tallon L.J."/>
            <person name="Jones K.M."/>
            <person name="Ulrich L.E."/>
            <person name="Gonzalez J.M."/>
            <person name="Zhulin I.B."/>
            <person name="Robb F.T."/>
            <person name="Eisen J.A."/>
        </authorList>
    </citation>
    <scope>NUCLEOTIDE SEQUENCE [LARGE SCALE GENOMIC DNA]</scope>
    <source>
        <strain>ATCC BAA-161 / DSM 6008 / Z-2901</strain>
    </source>
</reference>
<gene>
    <name evidence="1" type="primary">rpsK</name>
    <name type="ordered locus">CHY_2283</name>
</gene>
<protein>
    <recommendedName>
        <fullName evidence="1">Small ribosomal subunit protein uS11</fullName>
    </recommendedName>
    <alternativeName>
        <fullName evidence="2">30S ribosomal protein S11</fullName>
    </alternativeName>
</protein>
<dbReference type="EMBL" id="CP000141">
    <property type="protein sequence ID" value="ABB16192.1"/>
    <property type="molecule type" value="Genomic_DNA"/>
</dbReference>
<dbReference type="SMR" id="Q3A9U2"/>
<dbReference type="FunCoup" id="Q3A9U2">
    <property type="interactions" value="443"/>
</dbReference>
<dbReference type="STRING" id="246194.CHY_2283"/>
<dbReference type="KEGG" id="chy:CHY_2283"/>
<dbReference type="eggNOG" id="COG0100">
    <property type="taxonomic scope" value="Bacteria"/>
</dbReference>
<dbReference type="HOGENOM" id="CLU_072439_5_0_9"/>
<dbReference type="InParanoid" id="Q3A9U2"/>
<dbReference type="Proteomes" id="UP000002706">
    <property type="component" value="Chromosome"/>
</dbReference>
<dbReference type="GO" id="GO:1990904">
    <property type="term" value="C:ribonucleoprotein complex"/>
    <property type="evidence" value="ECO:0007669"/>
    <property type="project" value="UniProtKB-KW"/>
</dbReference>
<dbReference type="GO" id="GO:0005840">
    <property type="term" value="C:ribosome"/>
    <property type="evidence" value="ECO:0007669"/>
    <property type="project" value="UniProtKB-KW"/>
</dbReference>
<dbReference type="GO" id="GO:0019843">
    <property type="term" value="F:rRNA binding"/>
    <property type="evidence" value="ECO:0007669"/>
    <property type="project" value="UniProtKB-UniRule"/>
</dbReference>
<dbReference type="GO" id="GO:0003735">
    <property type="term" value="F:structural constituent of ribosome"/>
    <property type="evidence" value="ECO:0007669"/>
    <property type="project" value="InterPro"/>
</dbReference>
<dbReference type="GO" id="GO:0006412">
    <property type="term" value="P:translation"/>
    <property type="evidence" value="ECO:0007669"/>
    <property type="project" value="UniProtKB-UniRule"/>
</dbReference>
<dbReference type="FunFam" id="3.30.420.80:FF:000001">
    <property type="entry name" value="30S ribosomal protein S11"/>
    <property type="match status" value="1"/>
</dbReference>
<dbReference type="Gene3D" id="3.30.420.80">
    <property type="entry name" value="Ribosomal protein S11"/>
    <property type="match status" value="1"/>
</dbReference>
<dbReference type="HAMAP" id="MF_01310">
    <property type="entry name" value="Ribosomal_uS11"/>
    <property type="match status" value="1"/>
</dbReference>
<dbReference type="InterPro" id="IPR001971">
    <property type="entry name" value="Ribosomal_uS11"/>
</dbReference>
<dbReference type="InterPro" id="IPR019981">
    <property type="entry name" value="Ribosomal_uS11_bac-type"/>
</dbReference>
<dbReference type="InterPro" id="IPR018102">
    <property type="entry name" value="Ribosomal_uS11_CS"/>
</dbReference>
<dbReference type="InterPro" id="IPR036967">
    <property type="entry name" value="Ribosomal_uS11_sf"/>
</dbReference>
<dbReference type="NCBIfam" id="NF003698">
    <property type="entry name" value="PRK05309.1"/>
    <property type="match status" value="1"/>
</dbReference>
<dbReference type="NCBIfam" id="TIGR03632">
    <property type="entry name" value="uS11_bact"/>
    <property type="match status" value="1"/>
</dbReference>
<dbReference type="PANTHER" id="PTHR11759">
    <property type="entry name" value="40S RIBOSOMAL PROTEIN S14/30S RIBOSOMAL PROTEIN S11"/>
    <property type="match status" value="1"/>
</dbReference>
<dbReference type="Pfam" id="PF00411">
    <property type="entry name" value="Ribosomal_S11"/>
    <property type="match status" value="1"/>
</dbReference>
<dbReference type="PIRSF" id="PIRSF002131">
    <property type="entry name" value="Ribosomal_S11"/>
    <property type="match status" value="1"/>
</dbReference>
<dbReference type="SUPFAM" id="SSF53137">
    <property type="entry name" value="Translational machinery components"/>
    <property type="match status" value="1"/>
</dbReference>
<dbReference type="PROSITE" id="PS00054">
    <property type="entry name" value="RIBOSOMAL_S11"/>
    <property type="match status" value="1"/>
</dbReference>